<organism>
    <name type="scientific">Canine adenovirus serotype 1 (strain CLL)</name>
    <name type="common">CAdV-1</name>
    <name type="synonym">Canine adenovirus 1 (strain CLL)</name>
    <dbReference type="NCBI Taxonomy" id="69150"/>
    <lineage>
        <taxon>Viruses</taxon>
        <taxon>Varidnaviria</taxon>
        <taxon>Bamfordvirae</taxon>
        <taxon>Preplasmiviricota</taxon>
        <taxon>Tectiliviricetes</taxon>
        <taxon>Rowavirales</taxon>
        <taxon>Adenoviridae</taxon>
        <taxon>Mastadenovirus</taxon>
        <taxon>Canine mastadenovirus A</taxon>
    </lineage>
</organism>
<comment type="function">
    <molecule>Hexon-linking protein-N</molecule>
    <text evidence="1">Structural component of the virion that acts as a cement protein on the capsid interior and which glue the peripentonal hexons and group-of-nine hexons together.</text>
</comment>
<comment type="function">
    <molecule>Hexon-linking protein-C</molecule>
    <text evidence="1">Structural component of the virion that acts as a cement protein on the capsid interior and which glue the peripentonal hexons and group-of-nine hexons together.</text>
</comment>
<comment type="subunit">
    <text evidence="1">Interacts with the peripentonal hexons as well as the hexons in the facets. Part of a complex composed of the core-capsid bridging protein, the endosome lysis protein VI and the hexon-linking protein VIII; these interactions bridge the virus core to the capsid.</text>
</comment>
<comment type="subcellular location">
    <molecule>Hexon-linking protein-C</molecule>
    <subcellularLocation>
        <location evidence="1">Virion</location>
    </subcellularLocation>
    <text evidence="1">Located on the inner side of the capsid shell. Present in 120 copies per virion.</text>
</comment>
<comment type="subcellular location">
    <molecule>Pre-hexon-linking protein VIII</molecule>
    <subcellularLocation>
        <location evidence="1">Host nucleus</location>
    </subcellularLocation>
</comment>
<comment type="subcellular location">
    <molecule>Hexon-linking protein-N</molecule>
    <subcellularLocation>
        <location evidence="1">Virion</location>
    </subcellularLocation>
    <text evidence="1">Located on the inner side of the capsid shell. Present in 120 copies per virion.</text>
</comment>
<comment type="induction">
    <text evidence="1">Expressed in the late phase of the viral replicative cycle.</text>
</comment>
<comment type="PTM">
    <text evidence="1">Cleaved by the viral protease during virion maturation. May cause the middle segment to be shed from the capsid.</text>
</comment>
<comment type="miscellaneous">
    <text evidence="1">All late proteins expressed from the major late promoter are produced by alternative splicing and alternative polyadenylation of the same gene giving rise to non-overlapping ORFs. A leader sequence is present in the N-terminus of all these mRNAs and is recognized by the viral shutoff protein to provide expression although conventional translation via ribosome scanning from the cap has been shut off in the host cell.</text>
</comment>
<comment type="similarity">
    <text evidence="1 2">Belongs to the adenoviridae hexon-linking protein family.</text>
</comment>
<keyword id="KW-0167">Capsid protein</keyword>
<keyword id="KW-1048">Host nucleus</keyword>
<keyword id="KW-0426">Late protein</keyword>
<keyword id="KW-0597">Phosphoprotein</keyword>
<keyword id="KW-0946">Virion</keyword>
<dbReference type="EMBL" id="U55001">
    <property type="protein sequence ID" value="AAB05448.1"/>
    <property type="molecule type" value="Genomic_DNA"/>
</dbReference>
<dbReference type="EMBL" id="U09195">
    <property type="protein sequence ID" value="AAA18163.1"/>
    <property type="molecule type" value="Unassigned_RNA"/>
</dbReference>
<dbReference type="RefSeq" id="AP_000065.1">
    <property type="nucleotide sequence ID" value="AC_000003.1"/>
</dbReference>
<dbReference type="SMR" id="P68948"/>
<dbReference type="GO" id="GO:0042025">
    <property type="term" value="C:host cell nucleus"/>
    <property type="evidence" value="ECO:0007669"/>
    <property type="project" value="UniProtKB-SubCell"/>
</dbReference>
<dbReference type="GO" id="GO:0019028">
    <property type="term" value="C:viral capsid"/>
    <property type="evidence" value="ECO:0007669"/>
    <property type="project" value="UniProtKB-UniRule"/>
</dbReference>
<dbReference type="GO" id="GO:0031423">
    <property type="term" value="F:hexon binding"/>
    <property type="evidence" value="ECO:0007669"/>
    <property type="project" value="InterPro"/>
</dbReference>
<dbReference type="Gene3D" id="6.10.250.1460">
    <property type="match status" value="1"/>
</dbReference>
<dbReference type="HAMAP" id="MF_04049">
    <property type="entry name" value="ADV_CAP8"/>
    <property type="match status" value="1"/>
</dbReference>
<dbReference type="InterPro" id="IPR000646">
    <property type="entry name" value="Adeno_PVIII"/>
</dbReference>
<dbReference type="Pfam" id="PF01310">
    <property type="entry name" value="Adeno_PVIII"/>
    <property type="match status" value="1"/>
</dbReference>
<feature type="chain" id="PRO_0000421409" description="Pre-hexon-linking protein VIII" evidence="1">
    <location>
        <begin position="1"/>
        <end position="224"/>
    </location>
</feature>
<feature type="peptide" id="PRO_0000421410" description="Hexon-linking protein-N" evidence="1">
    <location>
        <begin position="1"/>
        <end position="111"/>
    </location>
</feature>
<feature type="propeptide" id="PRO_0000036503" evidence="1">
    <location>
        <begin position="112"/>
        <end position="154"/>
    </location>
</feature>
<feature type="peptide" id="PRO_0000036504" description="Hexon-linking protein-C" evidence="1">
    <location>
        <begin position="155"/>
        <end position="224"/>
    </location>
</feature>
<feature type="site" description="Cleavage; by viral protease" evidence="1">
    <location>
        <begin position="111"/>
        <end position="112"/>
    </location>
</feature>
<feature type="site" description="Cleavage; by viral protease" evidence="1">
    <location>
        <begin position="154"/>
        <end position="155"/>
    </location>
</feature>
<feature type="modified residue" description="Phosphothreonine; by host" evidence="1">
    <location>
        <position position="64"/>
    </location>
</feature>
<name>CAP8_ADECC</name>
<evidence type="ECO:0000255" key="1">
    <source>
        <dbReference type="HAMAP-Rule" id="MF_04049"/>
    </source>
</evidence>
<evidence type="ECO:0000305" key="2"/>
<gene>
    <name evidence="1" type="primary">L4</name>
</gene>
<protein>
    <recommendedName>
        <fullName evidence="1">Pre-hexon-linking protein VIII</fullName>
    </recommendedName>
    <alternativeName>
        <fullName evidence="1">Pre-protein VIII</fullName>
        <shortName evidence="1">pVIII</shortName>
    </alternativeName>
    <component>
        <recommendedName>
            <fullName evidence="1">Hexon-linking protein-N</fullName>
        </recommendedName>
        <alternativeName>
            <fullName evidence="1">12.1 kDa protein VIII</fullName>
        </alternativeName>
        <alternativeName>
            <fullName evidence="1">Protein VIII-N</fullName>
        </alternativeName>
    </component>
    <component>
        <recommendedName>
            <fullName evidence="1">Hexon-linking protein-C</fullName>
        </recommendedName>
        <alternativeName>
            <fullName evidence="1">7.6 kDa protein VIII</fullName>
        </alternativeName>
        <alternativeName>
            <fullName evidence="1">Protein VIII-C</fullName>
        </alternativeName>
    </component>
</protein>
<organismHost>
    <name type="scientific">Canis lupus familiaris</name>
    <name type="common">Dog</name>
    <name type="synonym">Canis familiaris</name>
    <dbReference type="NCBI Taxonomy" id="9615"/>
</organismHost>
<accession>P68948</accession>
<accession>Q89783</accession>
<reference key="1">
    <citation type="submission" date="1996-08" db="EMBL/GenBank/DDBJ databases">
        <title>DNA sequence and genomic organization of canine adenovirus type 1.</title>
        <authorList>
            <person name="Campbell J.B."/>
            <person name="Zhao Y."/>
        </authorList>
    </citation>
    <scope>NUCLEOTIDE SEQUENCE [LARGE SCALE GENOMIC DNA]</scope>
</reference>
<reference key="2">
    <citation type="journal article" date="1991" name="Virology">
        <title>Sequence analysis of putative E3 and fiber genomic regions of two strains of canine adenovirus type 1.</title>
        <authorList>
            <person name="Dragulev B.P."/>
            <person name="Sira S."/>
            <person name="Abouhaidar M.G."/>
            <person name="Campbell J.B."/>
        </authorList>
    </citation>
    <scope>NUCLEOTIDE SEQUENCE OF 154-224</scope>
</reference>
<proteinExistence type="inferred from homology"/>
<sequence length="224" mass="24533">MSKEIPTPYIWSYQPQTGHAAGASQDYSTQMNWFSAGPSMISHVYGIRDLRNKVLMTQAQITKTPRTIMDPPIWPASMLVQKHATPKTIALPRNHTLEQAMVNCGAQLAGGRQPSPSHIDIKDTMLAGTGIQLGEDIPSVSWIRPDGIFQLGGGSRSSFSPTQAFLTLQQASSTPRTGGVGSYQFVREFVPEVYLNPFSGPPDTFPDQFIPNYDIVTNSVDGYD</sequence>